<dbReference type="EMBL" id="CP001219">
    <property type="protein sequence ID" value="ACK79106.1"/>
    <property type="molecule type" value="Genomic_DNA"/>
</dbReference>
<dbReference type="RefSeq" id="WP_012536278.1">
    <property type="nucleotide sequence ID" value="NC_011761.1"/>
</dbReference>
<dbReference type="SMR" id="B7J5X3"/>
<dbReference type="STRING" id="243159.AFE_0677"/>
<dbReference type="PaxDb" id="243159-AFE_0677"/>
<dbReference type="GeneID" id="65280028"/>
<dbReference type="KEGG" id="afr:AFE_0677"/>
<dbReference type="eggNOG" id="COG0443">
    <property type="taxonomic scope" value="Bacteria"/>
</dbReference>
<dbReference type="HOGENOM" id="CLU_005965_2_3_6"/>
<dbReference type="Proteomes" id="UP000001362">
    <property type="component" value="Chromosome"/>
</dbReference>
<dbReference type="GO" id="GO:0005524">
    <property type="term" value="F:ATP binding"/>
    <property type="evidence" value="ECO:0007669"/>
    <property type="project" value="UniProtKB-KW"/>
</dbReference>
<dbReference type="GO" id="GO:0016887">
    <property type="term" value="F:ATP hydrolysis activity"/>
    <property type="evidence" value="ECO:0007669"/>
    <property type="project" value="UniProtKB-UniRule"/>
</dbReference>
<dbReference type="GO" id="GO:0140662">
    <property type="term" value="F:ATP-dependent protein folding chaperone"/>
    <property type="evidence" value="ECO:0007669"/>
    <property type="project" value="InterPro"/>
</dbReference>
<dbReference type="GO" id="GO:0051082">
    <property type="term" value="F:unfolded protein binding"/>
    <property type="evidence" value="ECO:0007669"/>
    <property type="project" value="InterPro"/>
</dbReference>
<dbReference type="GO" id="GO:0016226">
    <property type="term" value="P:iron-sulfur cluster assembly"/>
    <property type="evidence" value="ECO:0007669"/>
    <property type="project" value="InterPro"/>
</dbReference>
<dbReference type="FunFam" id="2.60.34.10:FF:000005">
    <property type="entry name" value="Chaperone protein HscA homolog"/>
    <property type="match status" value="1"/>
</dbReference>
<dbReference type="Gene3D" id="1.20.1270.10">
    <property type="match status" value="1"/>
</dbReference>
<dbReference type="Gene3D" id="3.30.420.40">
    <property type="match status" value="2"/>
</dbReference>
<dbReference type="Gene3D" id="3.90.640.10">
    <property type="entry name" value="Actin, Chain A, domain 4"/>
    <property type="match status" value="1"/>
</dbReference>
<dbReference type="Gene3D" id="2.60.34.10">
    <property type="entry name" value="Substrate Binding Domain Of DNAk, Chain A, domain 1"/>
    <property type="match status" value="1"/>
</dbReference>
<dbReference type="HAMAP" id="MF_00679">
    <property type="entry name" value="HscA"/>
    <property type="match status" value="1"/>
</dbReference>
<dbReference type="InterPro" id="IPR043129">
    <property type="entry name" value="ATPase_NBD"/>
</dbReference>
<dbReference type="InterPro" id="IPR018181">
    <property type="entry name" value="Heat_shock_70_CS"/>
</dbReference>
<dbReference type="InterPro" id="IPR029048">
    <property type="entry name" value="HSP70_C_sf"/>
</dbReference>
<dbReference type="InterPro" id="IPR029047">
    <property type="entry name" value="HSP70_peptide-bd_sf"/>
</dbReference>
<dbReference type="InterPro" id="IPR013126">
    <property type="entry name" value="Hsp_70_fam"/>
</dbReference>
<dbReference type="InterPro" id="IPR010236">
    <property type="entry name" value="ISC_FeS_clus_asmbl_HscA"/>
</dbReference>
<dbReference type="NCBIfam" id="TIGR01991">
    <property type="entry name" value="HscA"/>
    <property type="match status" value="1"/>
</dbReference>
<dbReference type="NCBIfam" id="NF003520">
    <property type="entry name" value="PRK05183.1"/>
    <property type="match status" value="1"/>
</dbReference>
<dbReference type="PANTHER" id="PTHR19375">
    <property type="entry name" value="HEAT SHOCK PROTEIN 70KDA"/>
    <property type="match status" value="1"/>
</dbReference>
<dbReference type="Pfam" id="PF00012">
    <property type="entry name" value="HSP70"/>
    <property type="match status" value="1"/>
</dbReference>
<dbReference type="PRINTS" id="PR00301">
    <property type="entry name" value="HEATSHOCK70"/>
</dbReference>
<dbReference type="SUPFAM" id="SSF53067">
    <property type="entry name" value="Actin-like ATPase domain"/>
    <property type="match status" value="2"/>
</dbReference>
<dbReference type="SUPFAM" id="SSF100934">
    <property type="entry name" value="Heat shock protein 70kD (HSP70), C-terminal subdomain"/>
    <property type="match status" value="1"/>
</dbReference>
<dbReference type="SUPFAM" id="SSF100920">
    <property type="entry name" value="Heat shock protein 70kD (HSP70), peptide-binding domain"/>
    <property type="match status" value="1"/>
</dbReference>
<dbReference type="PROSITE" id="PS00297">
    <property type="entry name" value="HSP70_1"/>
    <property type="match status" value="1"/>
</dbReference>
<dbReference type="PROSITE" id="PS00329">
    <property type="entry name" value="HSP70_2"/>
    <property type="match status" value="1"/>
</dbReference>
<dbReference type="PROSITE" id="PS01036">
    <property type="entry name" value="HSP70_3"/>
    <property type="match status" value="1"/>
</dbReference>
<evidence type="ECO:0000255" key="1">
    <source>
        <dbReference type="HAMAP-Rule" id="MF_00679"/>
    </source>
</evidence>
<feature type="chain" id="PRO_1000131660" description="Chaperone protein HscA homolog">
    <location>
        <begin position="1"/>
        <end position="621"/>
    </location>
</feature>
<proteinExistence type="inferred from homology"/>
<gene>
    <name evidence="1" type="primary">hscA</name>
    <name type="ordered locus">AFE_0677</name>
</gene>
<comment type="function">
    <text evidence="1">Chaperone involved in the maturation of iron-sulfur cluster-containing proteins. Has a low intrinsic ATPase activity which is markedly stimulated by HscB.</text>
</comment>
<comment type="similarity">
    <text evidence="1">Belongs to the heat shock protein 70 family.</text>
</comment>
<keyword id="KW-0067">ATP-binding</keyword>
<keyword id="KW-0143">Chaperone</keyword>
<keyword id="KW-0547">Nucleotide-binding</keyword>
<keyword id="KW-1185">Reference proteome</keyword>
<reference key="1">
    <citation type="journal article" date="2008" name="BMC Genomics">
        <title>Acidithiobacillus ferrooxidans metabolism: from genome sequence to industrial applications.</title>
        <authorList>
            <person name="Valdes J."/>
            <person name="Pedroso I."/>
            <person name="Quatrini R."/>
            <person name="Dodson R.J."/>
            <person name="Tettelin H."/>
            <person name="Blake R. II"/>
            <person name="Eisen J.A."/>
            <person name="Holmes D.S."/>
        </authorList>
    </citation>
    <scope>NUCLEOTIDE SEQUENCE [LARGE SCALE GENOMIC DNA]</scope>
    <source>
        <strain>ATCC 23270 / DSM 14882 / CIP 104768 / NCIMB 8455</strain>
    </source>
</reference>
<name>HSCA_ACIF2</name>
<protein>
    <recommendedName>
        <fullName evidence="1">Chaperone protein HscA homolog</fullName>
    </recommendedName>
</protein>
<organism>
    <name type="scientific">Acidithiobacillus ferrooxidans (strain ATCC 23270 / DSM 14882 / CIP 104768 / NCIMB 8455)</name>
    <name type="common">Ferrobacillus ferrooxidans (strain ATCC 23270)</name>
    <dbReference type="NCBI Taxonomy" id="243159"/>
    <lineage>
        <taxon>Bacteria</taxon>
        <taxon>Pseudomonadati</taxon>
        <taxon>Pseudomonadota</taxon>
        <taxon>Acidithiobacillia</taxon>
        <taxon>Acidithiobacillales</taxon>
        <taxon>Acidithiobacillaceae</taxon>
        <taxon>Acidithiobacillus</taxon>
    </lineage>
</organism>
<sequence>MALMQIAEPGTAADPHQRRLAIGIDLGTTHSLVASVLSAVPTVMRDHDGKYLLPSVVRYLGGGGIHVGYPAVAAAGQDPHNTIASAKRLMGRGHGDVQTLAGHLPYDLVPGEGMVRLRTVAGEKSPVEVSAEILRVLKERAVETLGGEPEGAVITVPAYFDEAQRQATKDAARLAGLNVLRLLAEPTAAAVAYGLDKGSEGIFAIYDLGGGTFDISILRLQAGVFEVLATAGDSALGGDDMDHALAEWLMQEEGGDASDPLWRRQVLQQARTAKEALSAVAETMIVLTPSGRAAREIKLSRGRLESLIQPVIQRSLPACRRALRDAGLKLDEIEGVVLVGGATRVPAVRAMVEEFFRQKPLTDIDPDQVVAIGAAIQADALVGNQREDLLLMDVLPLSLGLETMGGLVEKIIPRNTPIPVARAQEFTTFKDGQTAMSIHVVQGERDLVQDCRSLARFSLRGIPPMVAGAARIRVTFQVDADGLLAVRAEETSTGVRSEVVVKPSYGLNDEEIARMLQDSFIHGAEDVVRRRLSEAKVEGERVREALRTALAADADLLDPAEREALDKAGTALTNALSGDDAGVITAAAEAVETAAEPLVQRRMDSALRRAITGRSIDELGD</sequence>
<accession>B7J5X3</accession>